<sequence>MAPHPGKLKPATKAVHVRDLARRFATKTILDGVDLDIEEGEFVALLGRSGSGKSTFLRALAGLDHGVEGTGTLETPESLSVVFQDARLLPWRTVIQNVTLGLTGASGQEAGRKALAEVGLAGRETAWPNQLSGGEQQRVALARSLVREPALLLADEPFGALDALTRLKMHDLLRELCARHRPAVLLVTHDVDEAISLADRILVLDEGRLIEDLKIDLPTPRDHGDPRFAQFRIQLLSRLGVELPGRKAA</sequence>
<accession>Q1M7A6</accession>
<name>SSUB2_RHIJ3</name>
<comment type="function">
    <text evidence="1">Part of the ABC transporter complex SsuABC involved in aliphatic sulfonates import. Responsible for energy coupling to the transport system.</text>
</comment>
<comment type="catalytic activity">
    <reaction evidence="1">
        <text>ATP + H2O + aliphatic sulfonate-[sulfonate-binding protein]Side 1 = ADP + phosphate + aliphatic sulfonateSide 2 + [sulfonate-binding protein]Side 1.</text>
        <dbReference type="EC" id="7.6.2.14"/>
    </reaction>
</comment>
<comment type="subunit">
    <text evidence="1">The complex is composed of two ATP-binding proteins (SsuB), two transmembrane proteins (SsuC) and a solute-binding protein (SsuA).</text>
</comment>
<comment type="subcellular location">
    <subcellularLocation>
        <location evidence="1">Cell inner membrane</location>
        <topology evidence="1">Peripheral membrane protein</topology>
    </subcellularLocation>
</comment>
<comment type="similarity">
    <text evidence="1">Belongs to the ABC transporter superfamily. Aliphatic sulfonates importer (TC 3.A.1.17.2) family.</text>
</comment>
<protein>
    <recommendedName>
        <fullName evidence="1">Aliphatic sulfonates import ATP-binding protein SsuB 2</fullName>
        <ecNumber evidence="1">7.6.2.14</ecNumber>
    </recommendedName>
</protein>
<organism>
    <name type="scientific">Rhizobium johnstonii (strain DSM 114642 / LMG 32736 / 3841)</name>
    <name type="common">Rhizobium leguminosarum bv. viciae</name>
    <dbReference type="NCBI Taxonomy" id="216596"/>
    <lineage>
        <taxon>Bacteria</taxon>
        <taxon>Pseudomonadati</taxon>
        <taxon>Pseudomonadota</taxon>
        <taxon>Alphaproteobacteria</taxon>
        <taxon>Hyphomicrobiales</taxon>
        <taxon>Rhizobiaceae</taxon>
        <taxon>Rhizobium/Agrobacterium group</taxon>
        <taxon>Rhizobium</taxon>
        <taxon>Rhizobium johnstonii</taxon>
    </lineage>
</organism>
<evidence type="ECO:0000255" key="1">
    <source>
        <dbReference type="HAMAP-Rule" id="MF_01724"/>
    </source>
</evidence>
<geneLocation type="plasmid">
    <name>pRL10</name>
</geneLocation>
<feature type="chain" id="PRO_0000279951" description="Aliphatic sulfonates import ATP-binding protein SsuB 2">
    <location>
        <begin position="1"/>
        <end position="249"/>
    </location>
</feature>
<feature type="domain" description="ABC transporter" evidence="1">
    <location>
        <begin position="15"/>
        <end position="231"/>
    </location>
</feature>
<feature type="binding site" evidence="1">
    <location>
        <begin position="47"/>
        <end position="54"/>
    </location>
    <ligand>
        <name>ATP</name>
        <dbReference type="ChEBI" id="CHEBI:30616"/>
    </ligand>
</feature>
<dbReference type="EC" id="7.6.2.14" evidence="1"/>
<dbReference type="EMBL" id="AM236084">
    <property type="protein sequence ID" value="CAK10626.1"/>
    <property type="molecule type" value="Genomic_DNA"/>
</dbReference>
<dbReference type="RefSeq" id="WP_011654425.1">
    <property type="nucleotide sequence ID" value="NC_008381.1"/>
</dbReference>
<dbReference type="SMR" id="Q1M7A6"/>
<dbReference type="EnsemblBacteria" id="CAK10626">
    <property type="protein sequence ID" value="CAK10626"/>
    <property type="gene ID" value="pRL100400"/>
</dbReference>
<dbReference type="KEGG" id="rle:pRL100400"/>
<dbReference type="HOGENOM" id="CLU_000604_1_22_5"/>
<dbReference type="Proteomes" id="UP000006575">
    <property type="component" value="Plasmid pRL10"/>
</dbReference>
<dbReference type="GO" id="GO:0005886">
    <property type="term" value="C:plasma membrane"/>
    <property type="evidence" value="ECO:0007669"/>
    <property type="project" value="UniProtKB-SubCell"/>
</dbReference>
<dbReference type="GO" id="GO:0005524">
    <property type="term" value="F:ATP binding"/>
    <property type="evidence" value="ECO:0007669"/>
    <property type="project" value="UniProtKB-KW"/>
</dbReference>
<dbReference type="GO" id="GO:0016887">
    <property type="term" value="F:ATP hydrolysis activity"/>
    <property type="evidence" value="ECO:0007669"/>
    <property type="project" value="InterPro"/>
</dbReference>
<dbReference type="GO" id="GO:0004553">
    <property type="term" value="F:hydrolase activity, hydrolyzing O-glycosyl compounds"/>
    <property type="evidence" value="ECO:0007669"/>
    <property type="project" value="InterPro"/>
</dbReference>
<dbReference type="GO" id="GO:0005975">
    <property type="term" value="P:carbohydrate metabolic process"/>
    <property type="evidence" value="ECO:0007669"/>
    <property type="project" value="InterPro"/>
</dbReference>
<dbReference type="Gene3D" id="3.40.50.300">
    <property type="entry name" value="P-loop containing nucleotide triphosphate hydrolases"/>
    <property type="match status" value="1"/>
</dbReference>
<dbReference type="InterPro" id="IPR003593">
    <property type="entry name" value="AAA+_ATPase"/>
</dbReference>
<dbReference type="InterPro" id="IPR003439">
    <property type="entry name" value="ABC_transporter-like_ATP-bd"/>
</dbReference>
<dbReference type="InterPro" id="IPR017871">
    <property type="entry name" value="ABC_transporter-like_CS"/>
</dbReference>
<dbReference type="InterPro" id="IPR050166">
    <property type="entry name" value="ABC_transporter_ATP-bind"/>
</dbReference>
<dbReference type="InterPro" id="IPR001579">
    <property type="entry name" value="Glyco_hydro_18_chit_AS"/>
</dbReference>
<dbReference type="InterPro" id="IPR027417">
    <property type="entry name" value="P-loop_NTPase"/>
</dbReference>
<dbReference type="PANTHER" id="PTHR42788:SF17">
    <property type="entry name" value="ALIPHATIC SULFONATES IMPORT ATP-BINDING PROTEIN SSUB"/>
    <property type="match status" value="1"/>
</dbReference>
<dbReference type="PANTHER" id="PTHR42788">
    <property type="entry name" value="TAURINE IMPORT ATP-BINDING PROTEIN-RELATED"/>
    <property type="match status" value="1"/>
</dbReference>
<dbReference type="Pfam" id="PF00005">
    <property type="entry name" value="ABC_tran"/>
    <property type="match status" value="1"/>
</dbReference>
<dbReference type="SMART" id="SM00382">
    <property type="entry name" value="AAA"/>
    <property type="match status" value="1"/>
</dbReference>
<dbReference type="SUPFAM" id="SSF52540">
    <property type="entry name" value="P-loop containing nucleoside triphosphate hydrolases"/>
    <property type="match status" value="1"/>
</dbReference>
<dbReference type="PROSITE" id="PS00211">
    <property type="entry name" value="ABC_TRANSPORTER_1"/>
    <property type="match status" value="1"/>
</dbReference>
<dbReference type="PROSITE" id="PS50893">
    <property type="entry name" value="ABC_TRANSPORTER_2"/>
    <property type="match status" value="1"/>
</dbReference>
<dbReference type="PROSITE" id="PS51291">
    <property type="entry name" value="SSUB"/>
    <property type="match status" value="1"/>
</dbReference>
<proteinExistence type="inferred from homology"/>
<reference key="1">
    <citation type="journal article" date="2006" name="Genome Biol.">
        <title>The genome of Rhizobium leguminosarum has recognizable core and accessory components.</title>
        <authorList>
            <person name="Young J.P.W."/>
            <person name="Crossman L.C."/>
            <person name="Johnston A.W.B."/>
            <person name="Thomson N.R."/>
            <person name="Ghazoui Z.F."/>
            <person name="Hull K.H."/>
            <person name="Wexler M."/>
            <person name="Curson A.R.J."/>
            <person name="Todd J.D."/>
            <person name="Poole P.S."/>
            <person name="Mauchline T.H."/>
            <person name="East A.K."/>
            <person name="Quail M.A."/>
            <person name="Churcher C."/>
            <person name="Arrowsmith C."/>
            <person name="Cherevach I."/>
            <person name="Chillingworth T."/>
            <person name="Clarke K."/>
            <person name="Cronin A."/>
            <person name="Davis P."/>
            <person name="Fraser A."/>
            <person name="Hance Z."/>
            <person name="Hauser H."/>
            <person name="Jagels K."/>
            <person name="Moule S."/>
            <person name="Mungall K."/>
            <person name="Norbertczak H."/>
            <person name="Rabbinowitsch E."/>
            <person name="Sanders M."/>
            <person name="Simmonds M."/>
            <person name="Whitehead S."/>
            <person name="Parkhill J."/>
        </authorList>
    </citation>
    <scope>NUCLEOTIDE SEQUENCE [LARGE SCALE GENOMIC DNA]</scope>
    <source>
        <strain>DSM 114642 / LMG 32736 / 3841</strain>
    </source>
</reference>
<gene>
    <name evidence="1" type="primary">ssuB2</name>
    <name type="ordered locus">pRL100400</name>
</gene>
<keyword id="KW-0067">ATP-binding</keyword>
<keyword id="KW-0997">Cell inner membrane</keyword>
<keyword id="KW-1003">Cell membrane</keyword>
<keyword id="KW-0472">Membrane</keyword>
<keyword id="KW-0547">Nucleotide-binding</keyword>
<keyword id="KW-0614">Plasmid</keyword>
<keyword id="KW-1278">Translocase</keyword>
<keyword id="KW-0813">Transport</keyword>